<name>CLPX_KLEP3</name>
<evidence type="ECO:0000255" key="1">
    <source>
        <dbReference type="HAMAP-Rule" id="MF_00175"/>
    </source>
</evidence>
<evidence type="ECO:0000255" key="2">
    <source>
        <dbReference type="PROSITE-ProRule" id="PRU01250"/>
    </source>
</evidence>
<sequence length="424" mass="46338">MTDKRKDGSGKLLYCSFCGKSQHEVRKLIAGPSVYICDECVDLCNDIIREEIKEVAPHRERSALPTPHEIRHHLDDYVIGQEQAKKVLAVAVYNHYKRLRNGDTSNGVELGKSNILLIGPTGSGKTLLAETLARLLDVPFTMADATTLTEAGYVGEDVENIIQKLLQKCDYDVQKAQRGIVYIDEIDKISRKSDNPSITRDVSGEGVQQALLKLIEGTVAAVPPQGGRKHPQQEFLQVDTSKILFICGGAFAGLDKVISHRVETGSGIGFGATVKAKSDKASEGELLAQVEPEDLIKFGLIPEFIGRLPVVATLNELSEEALIQILKEPKNALTKQYQALFSLEGAELEFRDEALDAIAKKAMARKTGARGLRSIVEAALLDTMYDLPSMDDVEKVVIDESVIEGQSKPLLIYGKPEAQQASGE</sequence>
<accession>B5Y0U1</accession>
<organism>
    <name type="scientific">Klebsiella pneumoniae (strain 342)</name>
    <dbReference type="NCBI Taxonomy" id="507522"/>
    <lineage>
        <taxon>Bacteria</taxon>
        <taxon>Pseudomonadati</taxon>
        <taxon>Pseudomonadota</taxon>
        <taxon>Gammaproteobacteria</taxon>
        <taxon>Enterobacterales</taxon>
        <taxon>Enterobacteriaceae</taxon>
        <taxon>Klebsiella/Raoultella group</taxon>
        <taxon>Klebsiella</taxon>
        <taxon>Klebsiella pneumoniae complex</taxon>
    </lineage>
</organism>
<comment type="function">
    <text evidence="1">ATP-dependent specificity component of the Clp protease. It directs the protease to specific substrates. Can perform chaperone functions in the absence of ClpP.</text>
</comment>
<comment type="subunit">
    <text evidence="1">Component of the ClpX-ClpP complex. Forms a hexameric ring that, in the presence of ATP, binds to fourteen ClpP subunits assembled into a disk-like structure with a central cavity, resembling the structure of eukaryotic proteasomes.</text>
</comment>
<comment type="similarity">
    <text evidence="1">Belongs to the ClpX chaperone family.</text>
</comment>
<feature type="chain" id="PRO_1000097960" description="ATP-dependent Clp protease ATP-binding subunit ClpX">
    <location>
        <begin position="1"/>
        <end position="424"/>
    </location>
</feature>
<feature type="domain" description="ClpX-type ZB" evidence="2">
    <location>
        <begin position="2"/>
        <end position="56"/>
    </location>
</feature>
<feature type="binding site" evidence="2">
    <location>
        <position position="15"/>
    </location>
    <ligand>
        <name>Zn(2+)</name>
        <dbReference type="ChEBI" id="CHEBI:29105"/>
    </ligand>
</feature>
<feature type="binding site" evidence="2">
    <location>
        <position position="18"/>
    </location>
    <ligand>
        <name>Zn(2+)</name>
        <dbReference type="ChEBI" id="CHEBI:29105"/>
    </ligand>
</feature>
<feature type="binding site" evidence="2">
    <location>
        <position position="37"/>
    </location>
    <ligand>
        <name>Zn(2+)</name>
        <dbReference type="ChEBI" id="CHEBI:29105"/>
    </ligand>
</feature>
<feature type="binding site" evidence="2">
    <location>
        <position position="40"/>
    </location>
    <ligand>
        <name>Zn(2+)</name>
        <dbReference type="ChEBI" id="CHEBI:29105"/>
    </ligand>
</feature>
<feature type="binding site" evidence="1">
    <location>
        <begin position="120"/>
        <end position="127"/>
    </location>
    <ligand>
        <name>ATP</name>
        <dbReference type="ChEBI" id="CHEBI:30616"/>
    </ligand>
</feature>
<dbReference type="EMBL" id="CP000964">
    <property type="protein sequence ID" value="ACI10041.1"/>
    <property type="molecule type" value="Genomic_DNA"/>
</dbReference>
<dbReference type="SMR" id="B5Y0U1"/>
<dbReference type="KEGG" id="kpe:KPK_4282"/>
<dbReference type="HOGENOM" id="CLU_014218_8_2_6"/>
<dbReference type="Proteomes" id="UP000001734">
    <property type="component" value="Chromosome"/>
</dbReference>
<dbReference type="GO" id="GO:0009376">
    <property type="term" value="C:HslUV protease complex"/>
    <property type="evidence" value="ECO:0007669"/>
    <property type="project" value="TreeGrafter"/>
</dbReference>
<dbReference type="GO" id="GO:0005524">
    <property type="term" value="F:ATP binding"/>
    <property type="evidence" value="ECO:0007669"/>
    <property type="project" value="UniProtKB-UniRule"/>
</dbReference>
<dbReference type="GO" id="GO:0016887">
    <property type="term" value="F:ATP hydrolysis activity"/>
    <property type="evidence" value="ECO:0007669"/>
    <property type="project" value="InterPro"/>
</dbReference>
<dbReference type="GO" id="GO:0140662">
    <property type="term" value="F:ATP-dependent protein folding chaperone"/>
    <property type="evidence" value="ECO:0007669"/>
    <property type="project" value="InterPro"/>
</dbReference>
<dbReference type="GO" id="GO:0046983">
    <property type="term" value="F:protein dimerization activity"/>
    <property type="evidence" value="ECO:0007669"/>
    <property type="project" value="InterPro"/>
</dbReference>
<dbReference type="GO" id="GO:0051082">
    <property type="term" value="F:unfolded protein binding"/>
    <property type="evidence" value="ECO:0007669"/>
    <property type="project" value="UniProtKB-UniRule"/>
</dbReference>
<dbReference type="GO" id="GO:0008270">
    <property type="term" value="F:zinc ion binding"/>
    <property type="evidence" value="ECO:0007669"/>
    <property type="project" value="InterPro"/>
</dbReference>
<dbReference type="GO" id="GO:0051301">
    <property type="term" value="P:cell division"/>
    <property type="evidence" value="ECO:0007669"/>
    <property type="project" value="TreeGrafter"/>
</dbReference>
<dbReference type="GO" id="GO:0051603">
    <property type="term" value="P:proteolysis involved in protein catabolic process"/>
    <property type="evidence" value="ECO:0007669"/>
    <property type="project" value="TreeGrafter"/>
</dbReference>
<dbReference type="CDD" id="cd19497">
    <property type="entry name" value="RecA-like_ClpX"/>
    <property type="match status" value="1"/>
</dbReference>
<dbReference type="FunFam" id="1.10.8.60:FF:000002">
    <property type="entry name" value="ATP-dependent Clp protease ATP-binding subunit ClpX"/>
    <property type="match status" value="1"/>
</dbReference>
<dbReference type="FunFam" id="3.40.50.300:FF:000005">
    <property type="entry name" value="ATP-dependent Clp protease ATP-binding subunit ClpX"/>
    <property type="match status" value="1"/>
</dbReference>
<dbReference type="Gene3D" id="1.10.8.60">
    <property type="match status" value="1"/>
</dbReference>
<dbReference type="Gene3D" id="6.20.220.10">
    <property type="entry name" value="ClpX chaperone, C4-type zinc finger domain"/>
    <property type="match status" value="1"/>
</dbReference>
<dbReference type="Gene3D" id="3.40.50.300">
    <property type="entry name" value="P-loop containing nucleotide triphosphate hydrolases"/>
    <property type="match status" value="1"/>
</dbReference>
<dbReference type="HAMAP" id="MF_00175">
    <property type="entry name" value="ClpX"/>
    <property type="match status" value="1"/>
</dbReference>
<dbReference type="InterPro" id="IPR003593">
    <property type="entry name" value="AAA+_ATPase"/>
</dbReference>
<dbReference type="InterPro" id="IPR050052">
    <property type="entry name" value="ATP-dep_Clp_protease_ClpX"/>
</dbReference>
<dbReference type="InterPro" id="IPR003959">
    <property type="entry name" value="ATPase_AAA_core"/>
</dbReference>
<dbReference type="InterPro" id="IPR019489">
    <property type="entry name" value="Clp_ATPase_C"/>
</dbReference>
<dbReference type="InterPro" id="IPR004487">
    <property type="entry name" value="Clp_protease_ATP-bd_su_ClpX"/>
</dbReference>
<dbReference type="InterPro" id="IPR046425">
    <property type="entry name" value="ClpX_bact"/>
</dbReference>
<dbReference type="InterPro" id="IPR027417">
    <property type="entry name" value="P-loop_NTPase"/>
</dbReference>
<dbReference type="InterPro" id="IPR010603">
    <property type="entry name" value="Znf_CppX_C4"/>
</dbReference>
<dbReference type="InterPro" id="IPR038366">
    <property type="entry name" value="Znf_CppX_C4_sf"/>
</dbReference>
<dbReference type="NCBIfam" id="TIGR00382">
    <property type="entry name" value="clpX"/>
    <property type="match status" value="1"/>
</dbReference>
<dbReference type="NCBIfam" id="NF003745">
    <property type="entry name" value="PRK05342.1"/>
    <property type="match status" value="1"/>
</dbReference>
<dbReference type="PANTHER" id="PTHR48102:SF7">
    <property type="entry name" value="ATP-DEPENDENT CLP PROTEASE ATP-BINDING SUBUNIT CLPX-LIKE, MITOCHONDRIAL"/>
    <property type="match status" value="1"/>
</dbReference>
<dbReference type="PANTHER" id="PTHR48102">
    <property type="entry name" value="ATP-DEPENDENT CLP PROTEASE ATP-BINDING SUBUNIT CLPX-LIKE, MITOCHONDRIAL-RELATED"/>
    <property type="match status" value="1"/>
</dbReference>
<dbReference type="Pfam" id="PF07724">
    <property type="entry name" value="AAA_2"/>
    <property type="match status" value="1"/>
</dbReference>
<dbReference type="Pfam" id="PF10431">
    <property type="entry name" value="ClpB_D2-small"/>
    <property type="match status" value="1"/>
</dbReference>
<dbReference type="Pfam" id="PF06689">
    <property type="entry name" value="zf-C4_ClpX"/>
    <property type="match status" value="1"/>
</dbReference>
<dbReference type="SMART" id="SM00382">
    <property type="entry name" value="AAA"/>
    <property type="match status" value="1"/>
</dbReference>
<dbReference type="SMART" id="SM01086">
    <property type="entry name" value="ClpB_D2-small"/>
    <property type="match status" value="1"/>
</dbReference>
<dbReference type="SMART" id="SM00994">
    <property type="entry name" value="zf-C4_ClpX"/>
    <property type="match status" value="1"/>
</dbReference>
<dbReference type="SUPFAM" id="SSF57716">
    <property type="entry name" value="Glucocorticoid receptor-like (DNA-binding domain)"/>
    <property type="match status" value="1"/>
</dbReference>
<dbReference type="SUPFAM" id="SSF52540">
    <property type="entry name" value="P-loop containing nucleoside triphosphate hydrolases"/>
    <property type="match status" value="1"/>
</dbReference>
<dbReference type="PROSITE" id="PS51902">
    <property type="entry name" value="CLPX_ZB"/>
    <property type="match status" value="1"/>
</dbReference>
<gene>
    <name evidence="1" type="primary">clpX</name>
    <name type="ordered locus">KPK_4282</name>
</gene>
<keyword id="KW-0067">ATP-binding</keyword>
<keyword id="KW-0143">Chaperone</keyword>
<keyword id="KW-0479">Metal-binding</keyword>
<keyword id="KW-0547">Nucleotide-binding</keyword>
<keyword id="KW-0862">Zinc</keyword>
<proteinExistence type="inferred from homology"/>
<reference key="1">
    <citation type="journal article" date="2008" name="PLoS Genet.">
        <title>Complete genome sequence of the N2-fixing broad host range endophyte Klebsiella pneumoniae 342 and virulence predictions verified in mice.</title>
        <authorList>
            <person name="Fouts D.E."/>
            <person name="Tyler H.L."/>
            <person name="DeBoy R.T."/>
            <person name="Daugherty S."/>
            <person name="Ren Q."/>
            <person name="Badger J.H."/>
            <person name="Durkin A.S."/>
            <person name="Huot H."/>
            <person name="Shrivastava S."/>
            <person name="Kothari S."/>
            <person name="Dodson R.J."/>
            <person name="Mohamoud Y."/>
            <person name="Khouri H."/>
            <person name="Roesch L.F.W."/>
            <person name="Krogfelt K.A."/>
            <person name="Struve C."/>
            <person name="Triplett E.W."/>
            <person name="Methe B.A."/>
        </authorList>
    </citation>
    <scope>NUCLEOTIDE SEQUENCE [LARGE SCALE GENOMIC DNA]</scope>
    <source>
        <strain>342</strain>
    </source>
</reference>
<protein>
    <recommendedName>
        <fullName evidence="1">ATP-dependent Clp protease ATP-binding subunit ClpX</fullName>
    </recommendedName>
</protein>